<name>KHSE_THEKO</name>
<evidence type="ECO:0000255" key="1">
    <source>
        <dbReference type="HAMAP-Rule" id="MF_00384"/>
    </source>
</evidence>
<keyword id="KW-0028">Amino-acid biosynthesis</keyword>
<keyword id="KW-0067">ATP-binding</keyword>
<keyword id="KW-0963">Cytoplasm</keyword>
<keyword id="KW-0418">Kinase</keyword>
<keyword id="KW-0547">Nucleotide-binding</keyword>
<keyword id="KW-1185">Reference proteome</keyword>
<keyword id="KW-0791">Threonine biosynthesis</keyword>
<keyword id="KW-0808">Transferase</keyword>
<gene>
    <name evidence="1" type="primary">thrB</name>
    <name type="ordered locus">TK1444</name>
</gene>
<feature type="chain" id="PRO_0000156648" description="Homoserine kinase">
    <location>
        <begin position="1"/>
        <end position="292"/>
    </location>
</feature>
<feature type="binding site" evidence="1">
    <location>
        <begin position="81"/>
        <end position="91"/>
    </location>
    <ligand>
        <name>ATP</name>
        <dbReference type="ChEBI" id="CHEBI:30616"/>
    </ligand>
</feature>
<sequence>MRIRVPATIANFGPGFDVFGVGIGEPYDELKFVESDEWEIEVEGYDVPTDGRNVAVVAARALATLVGEELYLRMKLRKEIRPRSGLGSSGASSLAGALAAARVLGIEDDGLIIKAALAGEEAASGSAHGDNVVPAYYGDFTIIESLNPLRVHRIPVDFPLVVVLPQIEVPTREARRILPERVPMGDAVRNVALAGALVKALTSGDVQTVGRLLEDRIALPYRLRLMPWFARVWKAALDAGAYGAFVSGSGPAIFALGEDLHAIGKAIAEAFLEIGVDAEVYITRAGVGAFWL</sequence>
<proteinExistence type="inferred from homology"/>
<protein>
    <recommendedName>
        <fullName evidence="1">Homoserine kinase</fullName>
        <shortName evidence="1">HK</shortName>
        <shortName evidence="1">HSK</shortName>
        <ecNumber evidence="1">2.7.1.39</ecNumber>
    </recommendedName>
</protein>
<dbReference type="EC" id="2.7.1.39" evidence="1"/>
<dbReference type="EMBL" id="AP006878">
    <property type="protein sequence ID" value="BAD85633.1"/>
    <property type="molecule type" value="Genomic_DNA"/>
</dbReference>
<dbReference type="RefSeq" id="WP_011250395.1">
    <property type="nucleotide sequence ID" value="NC_006624.1"/>
</dbReference>
<dbReference type="SMR" id="Q5JH53"/>
<dbReference type="FunCoup" id="Q5JH53">
    <property type="interactions" value="111"/>
</dbReference>
<dbReference type="STRING" id="69014.TK1444"/>
<dbReference type="EnsemblBacteria" id="BAD85633">
    <property type="protein sequence ID" value="BAD85633"/>
    <property type="gene ID" value="TK1444"/>
</dbReference>
<dbReference type="GeneID" id="78447967"/>
<dbReference type="KEGG" id="tko:TK1444"/>
<dbReference type="PATRIC" id="fig|69014.16.peg.1406"/>
<dbReference type="eggNOG" id="arCOG01027">
    <property type="taxonomic scope" value="Archaea"/>
</dbReference>
<dbReference type="HOGENOM" id="CLU_041243_0_2_2"/>
<dbReference type="InParanoid" id="Q5JH53"/>
<dbReference type="OrthoDB" id="28273at2157"/>
<dbReference type="PhylomeDB" id="Q5JH53"/>
<dbReference type="UniPathway" id="UPA00050">
    <property type="reaction ID" value="UER00064"/>
</dbReference>
<dbReference type="Proteomes" id="UP000000536">
    <property type="component" value="Chromosome"/>
</dbReference>
<dbReference type="GO" id="GO:0005737">
    <property type="term" value="C:cytoplasm"/>
    <property type="evidence" value="ECO:0007669"/>
    <property type="project" value="UniProtKB-SubCell"/>
</dbReference>
<dbReference type="GO" id="GO:0005524">
    <property type="term" value="F:ATP binding"/>
    <property type="evidence" value="ECO:0007669"/>
    <property type="project" value="UniProtKB-UniRule"/>
</dbReference>
<dbReference type="GO" id="GO:0004413">
    <property type="term" value="F:homoserine kinase activity"/>
    <property type="evidence" value="ECO:0007669"/>
    <property type="project" value="UniProtKB-UniRule"/>
</dbReference>
<dbReference type="GO" id="GO:0009088">
    <property type="term" value="P:threonine biosynthetic process"/>
    <property type="evidence" value="ECO:0007669"/>
    <property type="project" value="UniProtKB-UniRule"/>
</dbReference>
<dbReference type="Gene3D" id="3.30.230.10">
    <property type="match status" value="1"/>
</dbReference>
<dbReference type="Gene3D" id="3.30.70.890">
    <property type="entry name" value="GHMP kinase, C-terminal domain"/>
    <property type="match status" value="1"/>
</dbReference>
<dbReference type="HAMAP" id="MF_00384">
    <property type="entry name" value="Homoser_kinase"/>
    <property type="match status" value="1"/>
</dbReference>
<dbReference type="InterPro" id="IPR013750">
    <property type="entry name" value="GHMP_kinase_C_dom"/>
</dbReference>
<dbReference type="InterPro" id="IPR036554">
    <property type="entry name" value="GHMP_kinase_C_sf"/>
</dbReference>
<dbReference type="InterPro" id="IPR006204">
    <property type="entry name" value="GHMP_kinase_N_dom"/>
</dbReference>
<dbReference type="InterPro" id="IPR000870">
    <property type="entry name" value="Homoserine_kinase"/>
</dbReference>
<dbReference type="InterPro" id="IPR020568">
    <property type="entry name" value="Ribosomal_Su5_D2-typ_SF"/>
</dbReference>
<dbReference type="InterPro" id="IPR014721">
    <property type="entry name" value="Ribsml_uS5_D2-typ_fold_subgr"/>
</dbReference>
<dbReference type="NCBIfam" id="NF002288">
    <property type="entry name" value="PRK01212.1-4"/>
    <property type="match status" value="1"/>
</dbReference>
<dbReference type="NCBIfam" id="TIGR00191">
    <property type="entry name" value="thrB"/>
    <property type="match status" value="1"/>
</dbReference>
<dbReference type="PANTHER" id="PTHR20861:SF1">
    <property type="entry name" value="HOMOSERINE KINASE"/>
    <property type="match status" value="1"/>
</dbReference>
<dbReference type="PANTHER" id="PTHR20861">
    <property type="entry name" value="HOMOSERINE/4-DIPHOSPHOCYTIDYL-2-C-METHYL-D-ERYTHRITOL KINASE"/>
    <property type="match status" value="1"/>
</dbReference>
<dbReference type="Pfam" id="PF08544">
    <property type="entry name" value="GHMP_kinases_C"/>
    <property type="match status" value="1"/>
</dbReference>
<dbReference type="Pfam" id="PF00288">
    <property type="entry name" value="GHMP_kinases_N"/>
    <property type="match status" value="1"/>
</dbReference>
<dbReference type="PIRSF" id="PIRSF000676">
    <property type="entry name" value="Homoser_kin"/>
    <property type="match status" value="1"/>
</dbReference>
<dbReference type="PRINTS" id="PR00958">
    <property type="entry name" value="HOMSERKINASE"/>
</dbReference>
<dbReference type="SUPFAM" id="SSF55060">
    <property type="entry name" value="GHMP Kinase, C-terminal domain"/>
    <property type="match status" value="1"/>
</dbReference>
<dbReference type="SUPFAM" id="SSF54211">
    <property type="entry name" value="Ribosomal protein S5 domain 2-like"/>
    <property type="match status" value="1"/>
</dbReference>
<reference key="1">
    <citation type="journal article" date="2005" name="Genome Res.">
        <title>Complete genome sequence of the hyperthermophilic archaeon Thermococcus kodakaraensis KOD1 and comparison with Pyrococcus genomes.</title>
        <authorList>
            <person name="Fukui T."/>
            <person name="Atomi H."/>
            <person name="Kanai T."/>
            <person name="Matsumi R."/>
            <person name="Fujiwara S."/>
            <person name="Imanaka T."/>
        </authorList>
    </citation>
    <scope>NUCLEOTIDE SEQUENCE [LARGE SCALE GENOMIC DNA]</scope>
    <source>
        <strain>ATCC BAA-918 / JCM 12380 / KOD1</strain>
    </source>
</reference>
<accession>Q5JH53</accession>
<organism>
    <name type="scientific">Thermococcus kodakarensis (strain ATCC BAA-918 / JCM 12380 / KOD1)</name>
    <name type="common">Pyrococcus kodakaraensis (strain KOD1)</name>
    <dbReference type="NCBI Taxonomy" id="69014"/>
    <lineage>
        <taxon>Archaea</taxon>
        <taxon>Methanobacteriati</taxon>
        <taxon>Methanobacteriota</taxon>
        <taxon>Thermococci</taxon>
        <taxon>Thermococcales</taxon>
        <taxon>Thermococcaceae</taxon>
        <taxon>Thermococcus</taxon>
    </lineage>
</organism>
<comment type="function">
    <text evidence="1">Catalyzes the ATP-dependent phosphorylation of L-homoserine to L-homoserine phosphate.</text>
</comment>
<comment type="catalytic activity">
    <reaction evidence="1">
        <text>L-homoserine + ATP = O-phospho-L-homoserine + ADP + H(+)</text>
        <dbReference type="Rhea" id="RHEA:13985"/>
        <dbReference type="ChEBI" id="CHEBI:15378"/>
        <dbReference type="ChEBI" id="CHEBI:30616"/>
        <dbReference type="ChEBI" id="CHEBI:57476"/>
        <dbReference type="ChEBI" id="CHEBI:57590"/>
        <dbReference type="ChEBI" id="CHEBI:456216"/>
        <dbReference type="EC" id="2.7.1.39"/>
    </reaction>
</comment>
<comment type="pathway">
    <text evidence="1">Amino-acid biosynthesis; L-threonine biosynthesis; L-threonine from L-aspartate: step 4/5.</text>
</comment>
<comment type="subcellular location">
    <subcellularLocation>
        <location evidence="1">Cytoplasm</location>
    </subcellularLocation>
</comment>
<comment type="similarity">
    <text evidence="1">Belongs to the GHMP kinase family. Homoserine kinase subfamily.</text>
</comment>